<protein>
    <recommendedName>
        <fullName evidence="14">Dynein regulatory complex subunit 4</fullName>
    </recommendedName>
    <alternativeName>
        <fullName>Growth arrest-specific protein 11</fullName>
        <shortName>GAS-11</shortName>
    </alternativeName>
    <alternativeName>
        <fullName>Growth arrest-specific protein 8</fullName>
        <shortName>GAS-8</shortName>
    </alternativeName>
</protein>
<evidence type="ECO:0000250" key="1">
    <source>
        <dbReference type="UniProtKB" id="Q60779"/>
    </source>
</evidence>
<evidence type="ECO:0000250" key="2">
    <source>
        <dbReference type="UniProtKB" id="Q7XJ96"/>
    </source>
</evidence>
<evidence type="ECO:0000255" key="3"/>
<evidence type="ECO:0000256" key="4">
    <source>
        <dbReference type="SAM" id="MobiDB-lite"/>
    </source>
</evidence>
<evidence type="ECO:0000269" key="5">
    <source>
    </source>
</evidence>
<evidence type="ECO:0000269" key="6">
    <source>
    </source>
</evidence>
<evidence type="ECO:0000269" key="7">
    <source>
    </source>
</evidence>
<evidence type="ECO:0000269" key="8">
    <source>
    </source>
</evidence>
<evidence type="ECO:0000269" key="9">
    <source>
    </source>
</evidence>
<evidence type="ECO:0000269" key="10">
    <source>
    </source>
</evidence>
<evidence type="ECO:0000269" key="11">
    <source>
    </source>
</evidence>
<evidence type="ECO:0000269" key="12">
    <source>
    </source>
</evidence>
<evidence type="ECO:0000303" key="13">
    <source>
    </source>
</evidence>
<evidence type="ECO:0000303" key="14">
    <source>
    </source>
</evidence>
<evidence type="ECO:0000305" key="15"/>
<organism>
    <name type="scientific">Homo sapiens</name>
    <name type="common">Human</name>
    <dbReference type="NCBI Taxonomy" id="9606"/>
    <lineage>
        <taxon>Eukaryota</taxon>
        <taxon>Metazoa</taxon>
        <taxon>Chordata</taxon>
        <taxon>Craniata</taxon>
        <taxon>Vertebrata</taxon>
        <taxon>Euteleostomi</taxon>
        <taxon>Mammalia</taxon>
        <taxon>Eutheria</taxon>
        <taxon>Euarchontoglires</taxon>
        <taxon>Primates</taxon>
        <taxon>Haplorrhini</taxon>
        <taxon>Catarrhini</taxon>
        <taxon>Hominidae</taxon>
        <taxon>Homo</taxon>
    </lineage>
</organism>
<accession>O95995</accession>
<accession>B2RCT1</accession>
<accession>B7Z4U1</accession>
<accession>G3V1L5</accession>
<accession>Q2M234</accession>
<dbReference type="EMBL" id="AF050079">
    <property type="protein sequence ID" value="AAC69519.1"/>
    <property type="molecule type" value="mRNA"/>
</dbReference>
<dbReference type="EMBL" id="AF050078">
    <property type="protein sequence ID" value="AAC69518.1"/>
    <property type="molecule type" value="Genomic_DNA"/>
</dbReference>
<dbReference type="EMBL" id="AF050068">
    <property type="protein sequence ID" value="AAC69518.1"/>
    <property type="status" value="JOINED"/>
    <property type="molecule type" value="Genomic_DNA"/>
</dbReference>
<dbReference type="EMBL" id="AF050069">
    <property type="protein sequence ID" value="AAC69518.1"/>
    <property type="status" value="JOINED"/>
    <property type="molecule type" value="Genomic_DNA"/>
</dbReference>
<dbReference type="EMBL" id="AF050070">
    <property type="protein sequence ID" value="AAC69518.1"/>
    <property type="status" value="JOINED"/>
    <property type="molecule type" value="Genomic_DNA"/>
</dbReference>
<dbReference type="EMBL" id="AF050071">
    <property type="protein sequence ID" value="AAC69518.1"/>
    <property type="status" value="JOINED"/>
    <property type="molecule type" value="Genomic_DNA"/>
</dbReference>
<dbReference type="EMBL" id="AF050072">
    <property type="protein sequence ID" value="AAC69518.1"/>
    <property type="status" value="JOINED"/>
    <property type="molecule type" value="Genomic_DNA"/>
</dbReference>
<dbReference type="EMBL" id="AF050073">
    <property type="protein sequence ID" value="AAC69518.1"/>
    <property type="status" value="JOINED"/>
    <property type="molecule type" value="Genomic_DNA"/>
</dbReference>
<dbReference type="EMBL" id="AF050074">
    <property type="protein sequence ID" value="AAC69518.1"/>
    <property type="status" value="JOINED"/>
    <property type="molecule type" value="Genomic_DNA"/>
</dbReference>
<dbReference type="EMBL" id="AF050075">
    <property type="protein sequence ID" value="AAC69518.1"/>
    <property type="status" value="JOINED"/>
    <property type="molecule type" value="Genomic_DNA"/>
</dbReference>
<dbReference type="EMBL" id="AF050076">
    <property type="protein sequence ID" value="AAC69518.1"/>
    <property type="status" value="JOINED"/>
    <property type="molecule type" value="Genomic_DNA"/>
</dbReference>
<dbReference type="EMBL" id="AF050077">
    <property type="protein sequence ID" value="AAC69518.1"/>
    <property type="status" value="JOINED"/>
    <property type="molecule type" value="Genomic_DNA"/>
</dbReference>
<dbReference type="EMBL" id="AK315261">
    <property type="protein sequence ID" value="BAG37678.1"/>
    <property type="molecule type" value="mRNA"/>
</dbReference>
<dbReference type="EMBL" id="AK297857">
    <property type="protein sequence ID" value="BAH12677.1"/>
    <property type="molecule type" value="mRNA"/>
</dbReference>
<dbReference type="EMBL" id="AC133919">
    <property type="status" value="NOT_ANNOTATED_CDS"/>
    <property type="molecule type" value="Genomic_DNA"/>
</dbReference>
<dbReference type="EMBL" id="CH471184">
    <property type="protein sequence ID" value="EAW66661.1"/>
    <property type="molecule type" value="Genomic_DNA"/>
</dbReference>
<dbReference type="EMBL" id="CH471184">
    <property type="protein sequence ID" value="EAW66659.1"/>
    <property type="molecule type" value="Genomic_DNA"/>
</dbReference>
<dbReference type="EMBL" id="BC104785">
    <property type="protein sequence ID" value="AAI04786.1"/>
    <property type="molecule type" value="mRNA"/>
</dbReference>
<dbReference type="EMBL" id="BC112121">
    <property type="protein sequence ID" value="AAI12122.1"/>
    <property type="molecule type" value="mRNA"/>
</dbReference>
<dbReference type="CCDS" id="CCDS10992.1">
    <molecule id="O95995-1"/>
</dbReference>
<dbReference type="CCDS" id="CCDS67101.1">
    <molecule id="O95995-2"/>
</dbReference>
<dbReference type="RefSeq" id="NP_001273134.1">
    <property type="nucleotide sequence ID" value="NM_001286205.1"/>
</dbReference>
<dbReference type="RefSeq" id="NP_001273137.1">
    <property type="nucleotide sequence ID" value="NM_001286208.1"/>
</dbReference>
<dbReference type="RefSeq" id="NP_001273138.1">
    <molecule id="O95995-2"/>
    <property type="nucleotide sequence ID" value="NM_001286209.2"/>
</dbReference>
<dbReference type="RefSeq" id="NP_001472.1">
    <molecule id="O95995-1"/>
    <property type="nucleotide sequence ID" value="NM_001481.3"/>
</dbReference>
<dbReference type="RefSeq" id="XP_005256361.1">
    <property type="nucleotide sequence ID" value="XM_005256304.4"/>
</dbReference>
<dbReference type="PDB" id="8J07">
    <property type="method" value="EM"/>
    <property type="resolution" value="4.10 A"/>
    <property type="chains" value="0/4=1-478"/>
</dbReference>
<dbReference type="PDBsum" id="8J07"/>
<dbReference type="EMDB" id="EMD-35888"/>
<dbReference type="SMR" id="O95995"/>
<dbReference type="BioGRID" id="108892">
    <property type="interactions" value="121"/>
</dbReference>
<dbReference type="ComplexPortal" id="CPX-8086">
    <property type="entry name" value="Nexin-dynein regulatory complex"/>
</dbReference>
<dbReference type="CORUM" id="O95995"/>
<dbReference type="FunCoup" id="O95995">
    <property type="interactions" value="266"/>
</dbReference>
<dbReference type="IntAct" id="O95995">
    <property type="interactions" value="110"/>
</dbReference>
<dbReference type="STRING" id="9606.ENSP00000268699"/>
<dbReference type="iPTMnet" id="O95995"/>
<dbReference type="PhosphoSitePlus" id="O95995"/>
<dbReference type="BioMuta" id="GAS8"/>
<dbReference type="jPOST" id="O95995"/>
<dbReference type="MassIVE" id="O95995"/>
<dbReference type="PaxDb" id="9606-ENSP00000268699"/>
<dbReference type="PeptideAtlas" id="O95995"/>
<dbReference type="ProteomicsDB" id="32370"/>
<dbReference type="ProteomicsDB" id="51170">
    <molecule id="O95995-1"/>
</dbReference>
<dbReference type="Pumba" id="O95995"/>
<dbReference type="Antibodypedia" id="30991">
    <property type="antibodies" value="168 antibodies from 25 providers"/>
</dbReference>
<dbReference type="DNASU" id="2622"/>
<dbReference type="Ensembl" id="ENST00000268699.9">
    <molecule id="O95995-1"/>
    <property type="protein sequence ID" value="ENSP00000268699.4"/>
    <property type="gene ID" value="ENSG00000141013.17"/>
</dbReference>
<dbReference type="Ensembl" id="ENST00000536122.7">
    <molecule id="O95995-2"/>
    <property type="protein sequence ID" value="ENSP00000440977.1"/>
    <property type="gene ID" value="ENSG00000141013.17"/>
</dbReference>
<dbReference type="GeneID" id="2622"/>
<dbReference type="KEGG" id="hsa:2622"/>
<dbReference type="MANE-Select" id="ENST00000268699.9">
    <property type="protein sequence ID" value="ENSP00000268699.4"/>
    <property type="RefSeq nucleotide sequence ID" value="NM_001481.3"/>
    <property type="RefSeq protein sequence ID" value="NP_001472.1"/>
</dbReference>
<dbReference type="UCSC" id="uc002fqi.1">
    <molecule id="O95995-1"/>
    <property type="organism name" value="human"/>
</dbReference>
<dbReference type="AGR" id="HGNC:4166"/>
<dbReference type="CTD" id="2622"/>
<dbReference type="DisGeNET" id="2622"/>
<dbReference type="GeneCards" id="GAS8"/>
<dbReference type="HGNC" id="HGNC:4166">
    <property type="gene designation" value="GAS8"/>
</dbReference>
<dbReference type="HPA" id="ENSG00000141013">
    <property type="expression patterns" value="Low tissue specificity"/>
</dbReference>
<dbReference type="MalaCards" id="GAS8"/>
<dbReference type="MIM" id="605178">
    <property type="type" value="gene"/>
</dbReference>
<dbReference type="MIM" id="616726">
    <property type="type" value="phenotype"/>
</dbReference>
<dbReference type="neXtProt" id="NX_O95995"/>
<dbReference type="OpenTargets" id="ENSG00000141013"/>
<dbReference type="Orphanet" id="244">
    <property type="disease" value="Primary ciliary dyskinesia"/>
</dbReference>
<dbReference type="PharmGKB" id="PA28579"/>
<dbReference type="VEuPathDB" id="HostDB:ENSG00000141013"/>
<dbReference type="eggNOG" id="ENOG502QQDA">
    <property type="taxonomic scope" value="Eukaryota"/>
</dbReference>
<dbReference type="GeneTree" id="ENSGT00390000009477"/>
<dbReference type="HOGENOM" id="CLU_045343_0_0_1"/>
<dbReference type="InParanoid" id="O95995"/>
<dbReference type="OMA" id="MKHLQYE"/>
<dbReference type="OrthoDB" id="767661at2759"/>
<dbReference type="PAN-GO" id="O95995">
    <property type="GO annotations" value="4 GO annotations based on evolutionary models"/>
</dbReference>
<dbReference type="PhylomeDB" id="O95995"/>
<dbReference type="TreeFam" id="TF323819"/>
<dbReference type="PathwayCommons" id="O95995"/>
<dbReference type="Reactome" id="R-HSA-5635838">
    <property type="pathway name" value="Activation of SMO"/>
</dbReference>
<dbReference type="SignaLink" id="O95995"/>
<dbReference type="BioGRID-ORCS" id="2622">
    <property type="hits" value="17 hits in 1157 CRISPR screens"/>
</dbReference>
<dbReference type="ChiTaRS" id="GAS8">
    <property type="organism name" value="human"/>
</dbReference>
<dbReference type="GenomeRNAi" id="2622"/>
<dbReference type="Pharos" id="O95995">
    <property type="development level" value="Tbio"/>
</dbReference>
<dbReference type="PRO" id="PR:O95995"/>
<dbReference type="Proteomes" id="UP000005640">
    <property type="component" value="Chromosome 16"/>
</dbReference>
<dbReference type="RNAct" id="O95995">
    <property type="molecule type" value="protein"/>
</dbReference>
<dbReference type="Bgee" id="ENSG00000141013">
    <property type="expression patterns" value="Expressed in right uterine tube and 178 other cell types or tissues"/>
</dbReference>
<dbReference type="ExpressionAtlas" id="O95995">
    <property type="expression patterns" value="baseline and differential"/>
</dbReference>
<dbReference type="GO" id="GO:0005930">
    <property type="term" value="C:axoneme"/>
    <property type="evidence" value="ECO:0000314"/>
    <property type="project" value="UniProtKB"/>
</dbReference>
<dbReference type="GO" id="GO:0036064">
    <property type="term" value="C:ciliary basal body"/>
    <property type="evidence" value="ECO:0000250"/>
    <property type="project" value="UniProtKB"/>
</dbReference>
<dbReference type="GO" id="GO:0005929">
    <property type="term" value="C:cilium"/>
    <property type="evidence" value="ECO:0000314"/>
    <property type="project" value="HPA"/>
</dbReference>
<dbReference type="GO" id="GO:0005829">
    <property type="term" value="C:cytosol"/>
    <property type="evidence" value="ECO:0000314"/>
    <property type="project" value="HPA"/>
</dbReference>
<dbReference type="GO" id="GO:0005576">
    <property type="term" value="C:extracellular region"/>
    <property type="evidence" value="ECO:0007669"/>
    <property type="project" value="GOC"/>
</dbReference>
<dbReference type="GO" id="GO:0005794">
    <property type="term" value="C:Golgi apparatus"/>
    <property type="evidence" value="ECO:0000314"/>
    <property type="project" value="HPA"/>
</dbReference>
<dbReference type="GO" id="GO:0043231">
    <property type="term" value="C:intracellular membrane-bounded organelle"/>
    <property type="evidence" value="ECO:0000314"/>
    <property type="project" value="HPA"/>
</dbReference>
<dbReference type="GO" id="GO:0005874">
    <property type="term" value="C:microtubule"/>
    <property type="evidence" value="ECO:0000314"/>
    <property type="project" value="UniProtKB"/>
</dbReference>
<dbReference type="GO" id="GO:0031514">
    <property type="term" value="C:motile cilium"/>
    <property type="evidence" value="ECO:0000314"/>
    <property type="project" value="UniProtKB"/>
</dbReference>
<dbReference type="GO" id="GO:0005886">
    <property type="term" value="C:plasma membrane"/>
    <property type="evidence" value="ECO:0000314"/>
    <property type="project" value="HPA"/>
</dbReference>
<dbReference type="GO" id="GO:0036126">
    <property type="term" value="C:sperm flagellum"/>
    <property type="evidence" value="ECO:0000250"/>
    <property type="project" value="UniProtKB"/>
</dbReference>
<dbReference type="GO" id="GO:0008017">
    <property type="term" value="F:microtubule binding"/>
    <property type="evidence" value="ECO:0000250"/>
    <property type="project" value="UniProtKB"/>
</dbReference>
<dbReference type="GO" id="GO:0031267">
    <property type="term" value="F:small GTPase binding"/>
    <property type="evidence" value="ECO:0007669"/>
    <property type="project" value="Ensembl"/>
</dbReference>
<dbReference type="GO" id="GO:0035082">
    <property type="term" value="P:axoneme assembly"/>
    <property type="evidence" value="ECO:0000315"/>
    <property type="project" value="UniProtKB"/>
</dbReference>
<dbReference type="GO" id="GO:0007420">
    <property type="term" value="P:brain development"/>
    <property type="evidence" value="ECO:0007669"/>
    <property type="project" value="Ensembl"/>
</dbReference>
<dbReference type="GO" id="GO:0060294">
    <property type="term" value="P:cilium movement involved in cell motility"/>
    <property type="evidence" value="ECO:0000315"/>
    <property type="project" value="GO_Central"/>
</dbReference>
<dbReference type="GO" id="GO:0007368">
    <property type="term" value="P:determination of left/right symmetry"/>
    <property type="evidence" value="ECO:0007669"/>
    <property type="project" value="Ensembl"/>
</dbReference>
<dbReference type="GO" id="GO:0003351">
    <property type="term" value="P:epithelial cilium movement involved in extracellular fluid movement"/>
    <property type="evidence" value="ECO:0007669"/>
    <property type="project" value="Ensembl"/>
</dbReference>
<dbReference type="GO" id="GO:0051649">
    <property type="term" value="P:establishment of localization in cell"/>
    <property type="evidence" value="ECO:0007669"/>
    <property type="project" value="Ensembl"/>
</dbReference>
<dbReference type="GO" id="GO:0030317">
    <property type="term" value="P:flagellated sperm motility"/>
    <property type="evidence" value="ECO:0000250"/>
    <property type="project" value="UniProtKB"/>
</dbReference>
<dbReference type="GO" id="GO:0008285">
    <property type="term" value="P:negative regulation of cell population proliferation"/>
    <property type="evidence" value="ECO:0000304"/>
    <property type="project" value="ProtInc"/>
</dbReference>
<dbReference type="GO" id="GO:1903566">
    <property type="term" value="P:positive regulation of protein localization to cilium"/>
    <property type="evidence" value="ECO:0000315"/>
    <property type="project" value="UniProtKB"/>
</dbReference>
<dbReference type="GO" id="GO:0045880">
    <property type="term" value="P:positive regulation of smoothened signaling pathway"/>
    <property type="evidence" value="ECO:0000250"/>
    <property type="project" value="UniProtKB"/>
</dbReference>
<dbReference type="GO" id="GO:0008104">
    <property type="term" value="P:protein localization"/>
    <property type="evidence" value="ECO:0007669"/>
    <property type="project" value="Ensembl"/>
</dbReference>
<dbReference type="GO" id="GO:1904526">
    <property type="term" value="P:regulation of microtubule binding"/>
    <property type="evidence" value="ECO:0000250"/>
    <property type="project" value="UniProtKB"/>
</dbReference>
<dbReference type="InterPro" id="IPR039308">
    <property type="entry name" value="GAS8"/>
</dbReference>
<dbReference type="InterPro" id="IPR025593">
    <property type="entry name" value="GAS8_dom"/>
</dbReference>
<dbReference type="PANTHER" id="PTHR31543">
    <property type="entry name" value="DYNEIN REGULATORY COMPLEX SUBUNIT 4"/>
    <property type="match status" value="1"/>
</dbReference>
<dbReference type="PANTHER" id="PTHR31543:SF0">
    <property type="entry name" value="DYNEIN REGULATORY COMPLEX SUBUNIT 4"/>
    <property type="match status" value="1"/>
</dbReference>
<dbReference type="Pfam" id="PF13851">
    <property type="entry name" value="GAS"/>
    <property type="match status" value="1"/>
</dbReference>
<reference key="1">
    <citation type="journal article" date="1998" name="Genomics">
        <title>Characterization and screening for mutations of the growth arrest-specific 11 (GAS11) and C16orf3 genes at 16q24.3 in breast cancer.</title>
        <authorList>
            <person name="Whitmore S.A."/>
            <person name="Settasatian C."/>
            <person name="Crawford J."/>
            <person name="Lower K.M."/>
            <person name="McCallum B."/>
            <person name="Seshadri R."/>
            <person name="Cornelisse C.J."/>
            <person name="Moerland E.W."/>
            <person name="Cleton-Jansen A.-M."/>
            <person name="Tipping A.J."/>
            <person name="Mathew C.G."/>
            <person name="Savnio M."/>
            <person name="Savoia A."/>
            <person name="Verlander P."/>
            <person name="Auerbach A.D."/>
            <person name="Van Berkel C."/>
            <person name="Pronk J.C."/>
            <person name="Doggett N.A."/>
            <person name="Callen D.F."/>
        </authorList>
    </citation>
    <scope>NUCLEOTIDE SEQUENCE [GENOMIC DNA / MRNA] (ISOFORM 1)</scope>
    <scope>TISSUE SPECIFICITY</scope>
</reference>
<reference key="2">
    <citation type="journal article" date="2004" name="Nat. Genet.">
        <title>Complete sequencing and characterization of 21,243 full-length human cDNAs.</title>
        <authorList>
            <person name="Ota T."/>
            <person name="Suzuki Y."/>
            <person name="Nishikawa T."/>
            <person name="Otsuki T."/>
            <person name="Sugiyama T."/>
            <person name="Irie R."/>
            <person name="Wakamatsu A."/>
            <person name="Hayashi K."/>
            <person name="Sato H."/>
            <person name="Nagai K."/>
            <person name="Kimura K."/>
            <person name="Makita H."/>
            <person name="Sekine M."/>
            <person name="Obayashi M."/>
            <person name="Nishi T."/>
            <person name="Shibahara T."/>
            <person name="Tanaka T."/>
            <person name="Ishii S."/>
            <person name="Yamamoto J."/>
            <person name="Saito K."/>
            <person name="Kawai Y."/>
            <person name="Isono Y."/>
            <person name="Nakamura Y."/>
            <person name="Nagahari K."/>
            <person name="Murakami K."/>
            <person name="Yasuda T."/>
            <person name="Iwayanagi T."/>
            <person name="Wagatsuma M."/>
            <person name="Shiratori A."/>
            <person name="Sudo H."/>
            <person name="Hosoiri T."/>
            <person name="Kaku Y."/>
            <person name="Kodaira H."/>
            <person name="Kondo H."/>
            <person name="Sugawara M."/>
            <person name="Takahashi M."/>
            <person name="Kanda K."/>
            <person name="Yokoi T."/>
            <person name="Furuya T."/>
            <person name="Kikkawa E."/>
            <person name="Omura Y."/>
            <person name="Abe K."/>
            <person name="Kamihara K."/>
            <person name="Katsuta N."/>
            <person name="Sato K."/>
            <person name="Tanikawa M."/>
            <person name="Yamazaki M."/>
            <person name="Ninomiya K."/>
            <person name="Ishibashi T."/>
            <person name="Yamashita H."/>
            <person name="Murakawa K."/>
            <person name="Fujimori K."/>
            <person name="Tanai H."/>
            <person name="Kimata M."/>
            <person name="Watanabe M."/>
            <person name="Hiraoka S."/>
            <person name="Chiba Y."/>
            <person name="Ishida S."/>
            <person name="Ono Y."/>
            <person name="Takiguchi S."/>
            <person name="Watanabe S."/>
            <person name="Yosida M."/>
            <person name="Hotuta T."/>
            <person name="Kusano J."/>
            <person name="Kanehori K."/>
            <person name="Takahashi-Fujii A."/>
            <person name="Hara H."/>
            <person name="Tanase T.-O."/>
            <person name="Nomura Y."/>
            <person name="Togiya S."/>
            <person name="Komai F."/>
            <person name="Hara R."/>
            <person name="Takeuchi K."/>
            <person name="Arita M."/>
            <person name="Imose N."/>
            <person name="Musashino K."/>
            <person name="Yuuki H."/>
            <person name="Oshima A."/>
            <person name="Sasaki N."/>
            <person name="Aotsuka S."/>
            <person name="Yoshikawa Y."/>
            <person name="Matsunawa H."/>
            <person name="Ichihara T."/>
            <person name="Shiohata N."/>
            <person name="Sano S."/>
            <person name="Moriya S."/>
            <person name="Momiyama H."/>
            <person name="Satoh N."/>
            <person name="Takami S."/>
            <person name="Terashima Y."/>
            <person name="Suzuki O."/>
            <person name="Nakagawa S."/>
            <person name="Senoh A."/>
            <person name="Mizoguchi H."/>
            <person name="Goto Y."/>
            <person name="Shimizu F."/>
            <person name="Wakebe H."/>
            <person name="Hishigaki H."/>
            <person name="Watanabe T."/>
            <person name="Sugiyama A."/>
            <person name="Takemoto M."/>
            <person name="Kawakami B."/>
            <person name="Yamazaki M."/>
            <person name="Watanabe K."/>
            <person name="Kumagai A."/>
            <person name="Itakura S."/>
            <person name="Fukuzumi Y."/>
            <person name="Fujimori Y."/>
            <person name="Komiyama M."/>
            <person name="Tashiro H."/>
            <person name="Tanigami A."/>
            <person name="Fujiwara T."/>
            <person name="Ono T."/>
            <person name="Yamada K."/>
            <person name="Fujii Y."/>
            <person name="Ozaki K."/>
            <person name="Hirao M."/>
            <person name="Ohmori Y."/>
            <person name="Kawabata A."/>
            <person name="Hikiji T."/>
            <person name="Kobatake N."/>
            <person name="Inagaki H."/>
            <person name="Ikema Y."/>
            <person name="Okamoto S."/>
            <person name="Okitani R."/>
            <person name="Kawakami T."/>
            <person name="Noguchi S."/>
            <person name="Itoh T."/>
            <person name="Shigeta K."/>
            <person name="Senba T."/>
            <person name="Matsumura K."/>
            <person name="Nakajima Y."/>
            <person name="Mizuno T."/>
            <person name="Morinaga M."/>
            <person name="Sasaki M."/>
            <person name="Togashi T."/>
            <person name="Oyama M."/>
            <person name="Hata H."/>
            <person name="Watanabe M."/>
            <person name="Komatsu T."/>
            <person name="Mizushima-Sugano J."/>
            <person name="Satoh T."/>
            <person name="Shirai Y."/>
            <person name="Takahashi Y."/>
            <person name="Nakagawa K."/>
            <person name="Okumura K."/>
            <person name="Nagase T."/>
            <person name="Nomura N."/>
            <person name="Kikuchi H."/>
            <person name="Masuho Y."/>
            <person name="Yamashita R."/>
            <person name="Nakai K."/>
            <person name="Yada T."/>
            <person name="Nakamura Y."/>
            <person name="Ohara O."/>
            <person name="Isogai T."/>
            <person name="Sugano S."/>
        </authorList>
    </citation>
    <scope>NUCLEOTIDE SEQUENCE [LARGE SCALE MRNA] (ISOFORMS 1 AND 2)</scope>
    <source>
        <tissue>Testis</tissue>
    </source>
</reference>
<reference key="3">
    <citation type="journal article" date="2004" name="Nature">
        <title>The sequence and analysis of duplication-rich human chromosome 16.</title>
        <authorList>
            <person name="Martin J."/>
            <person name="Han C."/>
            <person name="Gordon L.A."/>
            <person name="Terry A."/>
            <person name="Prabhakar S."/>
            <person name="She X."/>
            <person name="Xie G."/>
            <person name="Hellsten U."/>
            <person name="Chan Y.M."/>
            <person name="Altherr M."/>
            <person name="Couronne O."/>
            <person name="Aerts A."/>
            <person name="Bajorek E."/>
            <person name="Black S."/>
            <person name="Blumer H."/>
            <person name="Branscomb E."/>
            <person name="Brown N.C."/>
            <person name="Bruno W.J."/>
            <person name="Buckingham J.M."/>
            <person name="Callen D.F."/>
            <person name="Campbell C.S."/>
            <person name="Campbell M.L."/>
            <person name="Campbell E.W."/>
            <person name="Caoile C."/>
            <person name="Challacombe J.F."/>
            <person name="Chasteen L.A."/>
            <person name="Chertkov O."/>
            <person name="Chi H.C."/>
            <person name="Christensen M."/>
            <person name="Clark L.M."/>
            <person name="Cohn J.D."/>
            <person name="Denys M."/>
            <person name="Detter J.C."/>
            <person name="Dickson M."/>
            <person name="Dimitrijevic-Bussod M."/>
            <person name="Escobar J."/>
            <person name="Fawcett J.J."/>
            <person name="Flowers D."/>
            <person name="Fotopulos D."/>
            <person name="Glavina T."/>
            <person name="Gomez M."/>
            <person name="Gonzales E."/>
            <person name="Goodstein D."/>
            <person name="Goodwin L.A."/>
            <person name="Grady D.L."/>
            <person name="Grigoriev I."/>
            <person name="Groza M."/>
            <person name="Hammon N."/>
            <person name="Hawkins T."/>
            <person name="Haydu L."/>
            <person name="Hildebrand C.E."/>
            <person name="Huang W."/>
            <person name="Israni S."/>
            <person name="Jett J."/>
            <person name="Jewett P.B."/>
            <person name="Kadner K."/>
            <person name="Kimball H."/>
            <person name="Kobayashi A."/>
            <person name="Krawczyk M.-C."/>
            <person name="Leyba T."/>
            <person name="Longmire J.L."/>
            <person name="Lopez F."/>
            <person name="Lou Y."/>
            <person name="Lowry S."/>
            <person name="Ludeman T."/>
            <person name="Manohar C.F."/>
            <person name="Mark G.A."/>
            <person name="McMurray K.L."/>
            <person name="Meincke L.J."/>
            <person name="Morgan J."/>
            <person name="Moyzis R.K."/>
            <person name="Mundt M.O."/>
            <person name="Munk A.C."/>
            <person name="Nandkeshwar R.D."/>
            <person name="Pitluck S."/>
            <person name="Pollard M."/>
            <person name="Predki P."/>
            <person name="Parson-Quintana B."/>
            <person name="Ramirez L."/>
            <person name="Rash S."/>
            <person name="Retterer J."/>
            <person name="Ricke D.O."/>
            <person name="Robinson D.L."/>
            <person name="Rodriguez A."/>
            <person name="Salamov A."/>
            <person name="Saunders E.H."/>
            <person name="Scott D."/>
            <person name="Shough T."/>
            <person name="Stallings R.L."/>
            <person name="Stalvey M."/>
            <person name="Sutherland R.D."/>
            <person name="Tapia R."/>
            <person name="Tesmer J.G."/>
            <person name="Thayer N."/>
            <person name="Thompson L.S."/>
            <person name="Tice H."/>
            <person name="Torney D.C."/>
            <person name="Tran-Gyamfi M."/>
            <person name="Tsai M."/>
            <person name="Ulanovsky L.E."/>
            <person name="Ustaszewska A."/>
            <person name="Vo N."/>
            <person name="White P.S."/>
            <person name="Williams A.L."/>
            <person name="Wills P.L."/>
            <person name="Wu J.-R."/>
            <person name="Wu K."/>
            <person name="Yang J."/>
            <person name="DeJong P."/>
            <person name="Bruce D."/>
            <person name="Doggett N.A."/>
            <person name="Deaven L."/>
            <person name="Schmutz J."/>
            <person name="Grimwood J."/>
            <person name="Richardson P."/>
            <person name="Rokhsar D.S."/>
            <person name="Eichler E.E."/>
            <person name="Gilna P."/>
            <person name="Lucas S.M."/>
            <person name="Myers R.M."/>
            <person name="Rubin E.M."/>
            <person name="Pennacchio L.A."/>
        </authorList>
    </citation>
    <scope>NUCLEOTIDE SEQUENCE [LARGE SCALE GENOMIC DNA]</scope>
</reference>
<reference key="4">
    <citation type="submission" date="2005-09" db="EMBL/GenBank/DDBJ databases">
        <authorList>
            <person name="Mural R.J."/>
            <person name="Istrail S."/>
            <person name="Sutton G.G."/>
            <person name="Florea L."/>
            <person name="Halpern A.L."/>
            <person name="Mobarry C.M."/>
            <person name="Lippert R."/>
            <person name="Walenz B."/>
            <person name="Shatkay H."/>
            <person name="Dew I."/>
            <person name="Miller J.R."/>
            <person name="Flanigan M.J."/>
            <person name="Edwards N.J."/>
            <person name="Bolanos R."/>
            <person name="Fasulo D."/>
            <person name="Halldorsson B.V."/>
            <person name="Hannenhalli S."/>
            <person name="Turner R."/>
            <person name="Yooseph S."/>
            <person name="Lu F."/>
            <person name="Nusskern D.R."/>
            <person name="Shue B.C."/>
            <person name="Zheng X.H."/>
            <person name="Zhong F."/>
            <person name="Delcher A.L."/>
            <person name="Huson D.H."/>
            <person name="Kravitz S.A."/>
            <person name="Mouchard L."/>
            <person name="Reinert K."/>
            <person name="Remington K.A."/>
            <person name="Clark A.G."/>
            <person name="Waterman M.S."/>
            <person name="Eichler E.E."/>
            <person name="Adams M.D."/>
            <person name="Hunkapiller M.W."/>
            <person name="Myers E.W."/>
            <person name="Venter J.C."/>
        </authorList>
    </citation>
    <scope>NUCLEOTIDE SEQUENCE [LARGE SCALE GENOMIC DNA]</scope>
</reference>
<reference key="5">
    <citation type="journal article" date="2004" name="Genome Res.">
        <title>The status, quality, and expansion of the NIH full-length cDNA project: the Mammalian Gene Collection (MGC).</title>
        <authorList>
            <consortium name="The MGC Project Team"/>
        </authorList>
    </citation>
    <scope>NUCLEOTIDE SEQUENCE [LARGE SCALE MRNA] (ISOFORM 1)</scope>
    <source>
        <tissue>Brain</tissue>
    </source>
</reference>
<reference key="6">
    <citation type="journal article" date="2000" name="J. Biol. Chem.">
        <title>T lymphocyte-triggering factor of African trypanosomes is associated with the flagellar fraction of the cytoskeleton and represents a new family of proteins that are present in several divergent eukaryotes.</title>
        <authorList>
            <person name="Hill K.L."/>
            <person name="Hutchings N.R."/>
            <person name="Grandgenett P.M."/>
            <person name="Donelson J.E."/>
        </authorList>
    </citation>
    <scope>SUBCELLULAR LOCATION</scope>
</reference>
<reference key="7">
    <citation type="journal article" date="2006" name="Traffic">
        <title>Expanding the role of the dynein regulatory complex to non-axonemal functions: association of GAS11 with the Golgi apparatus.</title>
        <authorList>
            <person name="Colantonio J.R."/>
            <person name="Bekker J.M."/>
            <person name="Kim S.J."/>
            <person name="Morrissey K.M."/>
            <person name="Crosbie R.H."/>
            <person name="Hill K.L."/>
        </authorList>
    </citation>
    <scope>SUBCELLULAR LOCATION</scope>
</reference>
<reference key="8">
    <citation type="journal article" date="2011" name="J. Biol. Chem.">
        <title>Growth arrest specific 8 (Gas8) and G protein-coupled receptor kinase 2 (GRK2) cooperate in the control of Smoothened signaling.</title>
        <authorList>
            <person name="Evron T."/>
            <person name="Philipp M."/>
            <person name="Lu J."/>
            <person name="Meloni A.R."/>
            <person name="Burkhalter M."/>
            <person name="Chen W."/>
            <person name="Caron M.G."/>
        </authorList>
    </citation>
    <scope>INTERACTION WITH SMO</scope>
</reference>
<reference key="9">
    <citation type="journal article" date="2015" name="Am. J. Hum. Genet.">
        <title>Loss-of-function GAS8 mutations cause primary ciliary dyskinesia and disrupt the nexin-dynein regulatory complex.</title>
        <authorList>
            <person name="Olbrich H."/>
            <person name="Cremers C."/>
            <person name="Loges N.T."/>
            <person name="Werner C."/>
            <person name="Nielsen K.G."/>
            <person name="Marthin J.K."/>
            <person name="Philipsen M."/>
            <person name="Wallmeier J."/>
            <person name="Pennekamp P."/>
            <person name="Menchen T."/>
            <person name="Edelbusch C."/>
            <person name="Dougherty G.W."/>
            <person name="Schwartz O."/>
            <person name="Thiele H."/>
            <person name="Altmueller J."/>
            <person name="Rommelmann F."/>
            <person name="Omran H."/>
        </authorList>
    </citation>
    <scope>INVOLVEMENT IN CILD33</scope>
    <scope>FUNCTION</scope>
    <scope>SUBCELLULAR LOCATION</scope>
    <scope>TISSUE SPECIFICITY</scope>
</reference>
<reference key="10">
    <citation type="journal article" date="2021" name="Hum. Mol. Genet.">
        <title>Loss of DRC1 function leads to multiple morphological abnormalities of the sperm flagella and male infertility in human and mouse.</title>
        <authorList>
            <person name="Zhang J."/>
            <person name="He X."/>
            <person name="Wu H."/>
            <person name="Zhang X."/>
            <person name="Yang S."/>
            <person name="Liu C."/>
            <person name="Liu S."/>
            <person name="Hua R."/>
            <person name="Zhou S."/>
            <person name="Zhao S."/>
            <person name="Hu F."/>
            <person name="Zhang J."/>
            <person name="Liu W."/>
            <person name="Cheng H."/>
            <person name="Gao Y."/>
            <person name="Zhang F."/>
            <person name="Cao Y."/>
            <person name="Liu M."/>
        </authorList>
    </citation>
    <scope>INTERACTION WITH DRC1</scope>
</reference>
<reference key="11">
    <citation type="journal article" date="2016" name="Hum. Mutat.">
        <title>Mutations in GAS8, a gene encoding a nexin-dynein regulatory complex subunit, cause primary ciliary dyskinesia with axonemal disorganization.</title>
        <authorList>
            <person name="Jeanson L."/>
            <person name="Thomas L."/>
            <person name="Copin B."/>
            <person name="Coste A."/>
            <person name="Sermet-Gaudelus I."/>
            <person name="Dastot-Le Moal F."/>
            <person name="Duquesnoy P."/>
            <person name="Montantin G."/>
            <person name="Collot N."/>
            <person name="Tissier S."/>
            <person name="Papon J.F."/>
            <person name="Clement A."/>
            <person name="Louis B."/>
            <person name="Escudier E."/>
            <person name="Amselem S."/>
            <person name="Legendre M."/>
        </authorList>
    </citation>
    <scope>VARIANTS CILD33 183-ARG--THR-478 DEL AND 334-ARG--THR-478 DEL</scope>
    <scope>CHARACTERIZATION OF VARIANTS CILD33 183-ARG--THR-478 DEL AND 334-ARG--THR-478 DEL</scope>
    <scope>FUNCTION</scope>
    <scope>SUBCELLULAR LOCATION</scope>
    <scope>TISSUE SPECIFICITY</scope>
</reference>
<reference key="12">
    <citation type="journal article" date="2016" name="PLoS Genet.">
        <title>Mutation of growth arrest specific 8 reveals a role in motile cilia function and human disease.</title>
        <authorList>
            <person name="Lewis W.R."/>
            <person name="Malarkey E.B."/>
            <person name="Tritschler D."/>
            <person name="Bower R."/>
            <person name="Pasek R.C."/>
            <person name="Porath J.D."/>
            <person name="Birket S.E."/>
            <person name="Saunier S."/>
            <person name="Antignac C."/>
            <person name="Knowles M.R."/>
            <person name="Leigh M.W."/>
            <person name="Zariwala M.A."/>
            <person name="Challa A.K."/>
            <person name="Kesterson R.A."/>
            <person name="Rowe S.M."/>
            <person name="Drummond I.A."/>
            <person name="Parant J.M."/>
            <person name="Hildebrandt F."/>
            <person name="Porter M.E."/>
            <person name="Yoder B.K."/>
            <person name="Berbari N.F."/>
        </authorList>
    </citation>
    <scope>VARIANT LYS-199</scope>
    <scope>VARIANT CILD33 VAL-391</scope>
    <scope>CHARACTERIZATION OF VARIANT CILD33 VAL-391</scope>
    <scope>FUNCTION</scope>
</reference>
<name>DRC4_HUMAN</name>
<sequence length="478" mass="56356">MAPKKKGKKGKAKGTPIVDGLAPEDMSKEQVEEHVSRIREELDREREERNYFQLERDKIHTFWEITRRQLEEKKAELRNKDREMEEAEERHQVEIKVYKQKVKHLLYEHQNNLTEMKAEGTVVMKLAQKEHRIQESVLRKDMRALKVELKEQELASEVVVKNLRLKHTEEITRMRNDFERQVREIEAKYDKKMKMLRDELDLRRKTELHEVEERKNGQIHTLMQRHEEAFTDIKNYYNDITLNNLALINSLKEQMEDMRKKEDHLEREMAEVSGQNKRLADPLQKAREEMSEMQKQLANYERDKQILLCTKARLKVREKELKDLQWEHEVLEQRFTKVQQERDELYRKFTAAIQEVQQKTGFKNLVLERKLQALSAAVEKKEVQFNEVLAASNLDPAALTLVSRKLEDVLESKNSTIKDLQYELAQVCKAHNDLLRTYEAKLLAFGIPLDNVGFKPLETAVIGQTLGQGPAGLVGTPT</sequence>
<gene>
    <name type="primary">GAS8</name>
    <name evidence="14" type="synonym">DRC4</name>
    <name type="synonym">GAS11</name>
</gene>
<keyword id="KW-0002">3D-structure</keyword>
<keyword id="KW-0025">Alternative splicing</keyword>
<keyword id="KW-0966">Cell projection</keyword>
<keyword id="KW-1186">Ciliopathy</keyword>
<keyword id="KW-0969">Cilium</keyword>
<keyword id="KW-0175">Coiled coil</keyword>
<keyword id="KW-0963">Cytoplasm</keyword>
<keyword id="KW-0206">Cytoskeleton</keyword>
<keyword id="KW-0282">Flagellum</keyword>
<keyword id="KW-0333">Golgi apparatus</keyword>
<keyword id="KW-0493">Microtubule</keyword>
<keyword id="KW-0990">Primary ciliary dyskinesia</keyword>
<keyword id="KW-1267">Proteomics identification</keyword>
<keyword id="KW-1185">Reference proteome</keyword>
<comment type="function">
    <text evidence="1 2 8 9 10">Component of the nexin-dynein regulatory complex (N-DRC), a key regulator of ciliary/flagellar motility which maintains the alignment and integrity of the distal axoneme and regulates microtubule sliding in motile axonemes. Plays an important role in the assembly of the N-DRC linker (By similarity). Plays dual roles at both the primary (or non-motile) cilia to regulate hedgehog signaling and in motile cilia to coordinate cilia movement. Required for proper motile cilia functioning (PubMed:26387594, PubMed:27120127, PubMed:27472056). Positively regulates ciliary smoothened (SMO)-dependent Hedgehog (Hh) signaling pathway by facilitating the trafficking of SMO into the cilium and the stimulation of SMO activity in a GRK2-dependent manner (By similarity).</text>
</comment>
<comment type="subunit">
    <text evidence="1 2 7 11">Component of the nexin-dynein regulatory complex (N-DRC). Interacts with microtubules (By similarity). Interacts with SMO (PubMed:21659505). Interacts (via coiled-coil domains) with RAB3B (in GTP-bound form) (By similarity). Interacts with DRC1 (PubMed:34169321). Interacts with DRC7 (By similarity).</text>
</comment>
<comment type="interaction">
    <interactant intactId="EBI-1052570">
        <id>O95995</id>
    </interactant>
    <interactant intactId="EBI-714543">
        <id>Q15041</id>
        <label>ARL6IP1</label>
    </interactant>
    <organismsDiffer>false</organismsDiffer>
    <experiments>3</experiments>
</comment>
<comment type="interaction">
    <interactant intactId="EBI-1052570">
        <id>O95995</id>
    </interactant>
    <interactant intactId="EBI-702336">
        <id>O75815</id>
        <label>BCAR3</label>
    </interactant>
    <organismsDiffer>false</organismsDiffer>
    <experiments>3</experiments>
</comment>
<comment type="interaction">
    <interactant intactId="EBI-1052570">
        <id>O95995</id>
    </interactant>
    <interactant intactId="EBI-10193358">
        <id>Q96GS4</id>
        <label>BORCS6</label>
    </interactant>
    <organismsDiffer>false</organismsDiffer>
    <experiments>3</experiments>
</comment>
<comment type="interaction">
    <interactant intactId="EBI-1052570">
        <id>O95995</id>
    </interactant>
    <interactant intactId="EBI-358049">
        <id>Q13895</id>
        <label>BYSL</label>
    </interactant>
    <organismsDiffer>false</organismsDiffer>
    <experiments>3</experiments>
</comment>
<comment type="interaction">
    <interactant intactId="EBI-1052570">
        <id>O95995</id>
    </interactant>
    <interactant intactId="EBI-3866279">
        <id>Q9BWT7</id>
        <label>CARD10</label>
    </interactant>
    <organismsDiffer>false</organismsDiffer>
    <experiments>3</experiments>
</comment>
<comment type="interaction">
    <interactant intactId="EBI-1052570">
        <id>O95995</id>
    </interactant>
    <interactant intactId="EBI-11530605">
        <id>Q9H257-2</id>
        <label>CARD9</label>
    </interactant>
    <organismsDiffer>false</organismsDiffer>
    <experiments>3</experiments>
</comment>
<comment type="interaction">
    <interactant intactId="EBI-1052570">
        <id>O95995</id>
    </interactant>
    <interactant intactId="EBI-11977221">
        <id>Q86Z20</id>
        <label>CCDC125</label>
    </interactant>
    <organismsDiffer>false</organismsDiffer>
    <experiments>3</experiments>
</comment>
<comment type="interaction">
    <interactant intactId="EBI-1052570">
        <id>O95995</id>
    </interactant>
    <interactant intactId="EBI-10749669">
        <id>Q8IYE0</id>
        <label>CCDC146</label>
    </interactant>
    <organismsDiffer>false</organismsDiffer>
    <experiments>3</experiments>
</comment>
<comment type="interaction">
    <interactant intactId="EBI-1052570">
        <id>O95995</id>
    </interactant>
    <interactant intactId="EBI-1045350">
        <id>Q16204</id>
        <label>CCDC6</label>
    </interactant>
    <organismsDiffer>false</organismsDiffer>
    <experiments>3</experiments>
</comment>
<comment type="interaction">
    <interactant intactId="EBI-1052570">
        <id>O95995</id>
    </interactant>
    <interactant intactId="EBI-10175300">
        <id>Q8TD31-3</id>
        <label>CCHCR1</label>
    </interactant>
    <organismsDiffer>false</organismsDiffer>
    <experiments>3</experiments>
</comment>
<comment type="interaction">
    <interactant intactId="EBI-1052570">
        <id>O95995</id>
    </interactant>
    <interactant intactId="EBI-3905829">
        <id>P51959</id>
        <label>CCNG1</label>
    </interactant>
    <organismsDiffer>false</organismsDiffer>
    <experiments>3</experiments>
</comment>
<comment type="interaction">
    <interactant intactId="EBI-1052570">
        <id>O95995</id>
    </interactant>
    <interactant intactId="EBI-295634">
        <id>Q16543</id>
        <label>CDC37</label>
    </interactant>
    <organismsDiffer>false</organismsDiffer>
    <experiments>3</experiments>
</comment>
<comment type="interaction">
    <interactant intactId="EBI-1052570">
        <id>O95995</id>
    </interactant>
    <interactant intactId="EBI-1181367">
        <id>Q01850</id>
        <label>CDR2</label>
    </interactant>
    <organismsDiffer>false</organismsDiffer>
    <experiments>3</experiments>
</comment>
<comment type="interaction">
    <interactant intactId="EBI-1052570">
        <id>O95995</id>
    </interactant>
    <interactant intactId="EBI-739624">
        <id>Q8NHQ1</id>
        <label>CEP70</label>
    </interactant>
    <organismsDiffer>false</organismsDiffer>
    <experiments>3</experiments>
</comment>
<comment type="interaction">
    <interactant intactId="EBI-1052570">
        <id>O95995</id>
    </interactant>
    <interactant intactId="EBI-742422">
        <id>Q96M91</id>
        <label>CFAP53</label>
    </interactant>
    <organismsDiffer>false</organismsDiffer>
    <experiments>3</experiments>
</comment>
<comment type="interaction">
    <interactant intactId="EBI-1052570">
        <id>O95995</id>
    </interactant>
    <interactant intactId="EBI-739784">
        <id>Q9BW66</id>
        <label>CINP</label>
    </interactant>
    <organismsDiffer>false</organismsDiffer>
    <experiments>3</experiments>
</comment>
<comment type="interaction">
    <interactant intactId="EBI-1052570">
        <id>O95995</id>
    </interactant>
    <interactant intactId="EBI-456371">
        <id>P61024</id>
        <label>CKS1B</label>
    </interactant>
    <organismsDiffer>false</organismsDiffer>
    <experiments>3</experiments>
</comment>
<comment type="interaction">
    <interactant intactId="EBI-1052570">
        <id>O95995</id>
    </interactant>
    <interactant intactId="EBI-3866319">
        <id>Q9Y2V7</id>
        <label>COG6</label>
    </interactant>
    <organismsDiffer>false</organismsDiffer>
    <experiments>3</experiments>
</comment>
<comment type="interaction">
    <interactant intactId="EBI-1052570">
        <id>O95995</id>
    </interactant>
    <interactant intactId="EBI-11523759">
        <id>Q8N684-3</id>
        <label>CPSF7</label>
    </interactant>
    <organismsDiffer>false</organismsDiffer>
    <experiments>3</experiments>
</comment>
<comment type="interaction">
    <interactant intactId="EBI-1052570">
        <id>O95995</id>
    </interactant>
    <interactant intactId="EBI-7519424">
        <id>P53674</id>
        <label>CRYBB1</label>
    </interactant>
    <organismsDiffer>false</organismsDiffer>
    <experiments>3</experiments>
</comment>
<comment type="interaction">
    <interactant intactId="EBI-1052570">
        <id>O95995</id>
    </interactant>
    <interactant intactId="EBI-12051833">
        <id>Q5HYN5</id>
        <label>CT45A1</label>
    </interactant>
    <organismsDiffer>false</organismsDiffer>
    <experiments>3</experiments>
</comment>
<comment type="interaction">
    <interactant intactId="EBI-1052570">
        <id>O95995</id>
    </interactant>
    <interactant intactId="EBI-5453285">
        <id>Q2TBE0</id>
        <label>CWF19L2</label>
    </interactant>
    <organismsDiffer>false</organismsDiffer>
    <experiments>3</experiments>
</comment>
<comment type="interaction">
    <interactant intactId="EBI-1052570">
        <id>O95995</id>
    </interactant>
    <interactant intactId="EBI-3867333">
        <id>A8MQ03</id>
        <label>CYSRT1</label>
    </interactant>
    <organismsDiffer>false</organismsDiffer>
    <experiments>3</experiments>
</comment>
<comment type="interaction">
    <interactant intactId="EBI-1052570">
        <id>O95995</id>
    </interactant>
    <interactant intactId="EBI-77321">
        <id>Q9UER7</id>
        <label>DAXX</label>
    </interactant>
    <organismsDiffer>false</organismsDiffer>
    <experiments>5</experiments>
</comment>
<comment type="interaction">
    <interactant intactId="EBI-1052570">
        <id>O95995</id>
    </interactant>
    <interactant intactId="EBI-746012">
        <id>Q92841</id>
        <label>DDX17</label>
    </interactant>
    <organismsDiffer>false</organismsDiffer>
    <experiments>3</experiments>
</comment>
<comment type="interaction">
    <interactant intactId="EBI-1052570">
        <id>O95995</id>
    </interactant>
    <interactant intactId="EBI-11988027">
        <id>Q9NRI5-2</id>
        <label>DISC1</label>
    </interactant>
    <organismsDiffer>false</organismsDiffer>
    <experiments>3</experiments>
</comment>
<comment type="interaction">
    <interactant intactId="EBI-1052570">
        <id>O95995</id>
    </interactant>
    <interactant intactId="EBI-399105">
        <id>Q9NPF5</id>
        <label>DMAP1</label>
    </interactant>
    <organismsDiffer>false</organismsDiffer>
    <experiments>3</experiments>
</comment>
<comment type="interaction">
    <interactant intactId="EBI-1052570">
        <id>O95995</id>
    </interactant>
    <interactant intactId="EBI-769261">
        <id>Q96JC9</id>
        <label>EAF1</label>
    </interactant>
    <organismsDiffer>false</organismsDiffer>
    <experiments>3</experiments>
</comment>
<comment type="interaction">
    <interactant intactId="EBI-1052570">
        <id>O95995</id>
    </interactant>
    <interactant intactId="EBI-2339219">
        <id>Q08426</id>
        <label>EHHADH</label>
    </interactant>
    <organismsDiffer>false</organismsDiffer>
    <experiments>3</experiments>
</comment>
<comment type="interaction">
    <interactant intactId="EBI-1052570">
        <id>O95995</id>
    </interactant>
    <interactant intactId="EBI-750700">
        <id>Q8N9N8</id>
        <label>EIF1AD</label>
    </interactant>
    <organismsDiffer>false</organismsDiffer>
    <experiments>3</experiments>
</comment>
<comment type="interaction">
    <interactant intactId="EBI-1052570">
        <id>O95995</id>
    </interactant>
    <interactant intactId="EBI-12699417">
        <id>P07992-3</id>
        <label>ERCC1</label>
    </interactant>
    <organismsDiffer>false</organismsDiffer>
    <experiments>3</experiments>
</comment>
<comment type="interaction">
    <interactant intactId="EBI-1052570">
        <id>O95995</id>
    </interactant>
    <interactant intactId="EBI-749523">
        <id>Q96CN4</id>
        <label>EVI5L</label>
    </interactant>
    <organismsDiffer>false</organismsDiffer>
    <experiments>3</experiments>
</comment>
<comment type="interaction">
    <interactant intactId="EBI-1052570">
        <id>O95995</id>
    </interactant>
    <interactant intactId="EBI-719941">
        <id>Q3B820</id>
        <label>FAM161A</label>
    </interactant>
    <organismsDiffer>false</organismsDiffer>
    <experiments>3</experiments>
</comment>
<comment type="interaction">
    <interactant intactId="EBI-1052570">
        <id>O95995</id>
    </interactant>
    <interactant intactId="EBI-7225287">
        <id>Q96MY7</id>
        <label>FAM161B</label>
    </interactant>
    <organismsDiffer>false</organismsDiffer>
    <experiments>3</experiments>
</comment>
<comment type="interaction">
    <interactant intactId="EBI-1052570">
        <id>O95995</id>
    </interactant>
    <interactant intactId="EBI-701903">
        <id>Q14192</id>
        <label>FHL2</label>
    </interactant>
    <organismsDiffer>false</organismsDiffer>
    <experiments>3</experiments>
</comment>
<comment type="interaction">
    <interactant intactId="EBI-1052570">
        <id>O95995</id>
    </interactant>
    <interactant intactId="EBI-372506">
        <id>Q8TAE8</id>
        <label>GADD45GIP1</label>
    </interactant>
    <organismsDiffer>false</organismsDiffer>
    <experiments>3</experiments>
</comment>
<comment type="interaction">
    <interactant intactId="EBI-1052570">
        <id>O95995</id>
    </interactant>
    <interactant intactId="EBI-746252">
        <id>Q96CN9</id>
        <label>GCC1</label>
    </interactant>
    <organismsDiffer>false</organismsDiffer>
    <experiments>3</experiments>
</comment>
<comment type="interaction">
    <interactant intactId="EBI-1052570">
        <id>O95995</id>
    </interactant>
    <interactant intactId="EBI-744104">
        <id>P55040</id>
        <label>GEM</label>
    </interactant>
    <organismsDiffer>false</organismsDiffer>
    <experiments>3</experiments>
</comment>
<comment type="interaction">
    <interactant intactId="EBI-1052570">
        <id>O95995</id>
    </interactant>
    <interactant intactId="EBI-618309">
        <id>Q08379</id>
        <label>GOLGA2</label>
    </interactant>
    <organismsDiffer>false</organismsDiffer>
    <experiments>3</experiments>
</comment>
<comment type="interaction">
    <interactant intactId="EBI-1052570">
        <id>O95995</id>
    </interactant>
    <interactant intactId="EBI-11519926">
        <id>Q6PI77</id>
        <label>GPRASP3</label>
    </interactant>
    <organismsDiffer>false</organismsDiffer>
    <experiments>3</experiments>
</comment>
<comment type="interaction">
    <interactant intactId="EBI-1052570">
        <id>O95995</id>
    </interactant>
    <interactant intactId="EBI-717919">
        <id>Q4V328</id>
        <label>GRIPAP1</label>
    </interactant>
    <organismsDiffer>false</organismsDiffer>
    <experiments>3</experiments>
</comment>
<comment type="interaction">
    <interactant intactId="EBI-1052570">
        <id>O95995</id>
    </interactant>
    <interactant intactId="EBI-752440">
        <id>O15217</id>
        <label>GSTA4</label>
    </interactant>
    <organismsDiffer>false</organismsDiffer>
    <experiments>3</experiments>
</comment>
<comment type="interaction">
    <interactant intactId="EBI-1052570">
        <id>O95995</id>
    </interactant>
    <interactant intactId="EBI-5460660">
        <id>Q96MH2</id>
        <label>HEXIM2</label>
    </interactant>
    <organismsDiffer>false</organismsDiffer>
    <experiments>3</experiments>
</comment>
<comment type="interaction">
    <interactant intactId="EBI-1052570">
        <id>O95995</id>
    </interactant>
    <interactant intactId="EBI-748420">
        <id>Q9NSC5</id>
        <label>HOMER3</label>
    </interactant>
    <organismsDiffer>false</organismsDiffer>
    <experiments>3</experiments>
</comment>
<comment type="interaction">
    <interactant intactId="EBI-1052570">
        <id>O95995</id>
    </interactant>
    <interactant intactId="EBI-740785">
        <id>P49639</id>
        <label>HOXA1</label>
    </interactant>
    <organismsDiffer>false</organismsDiffer>
    <experiments>3</experiments>
</comment>
<comment type="interaction">
    <interactant intactId="EBI-1052570">
        <id>O95995</id>
    </interactant>
    <interactant intactId="EBI-7116203">
        <id>O75031</id>
        <label>HSF2BP</label>
    </interactant>
    <organismsDiffer>false</organismsDiffer>
    <experiments>3</experiments>
</comment>
<comment type="interaction">
    <interactant intactId="EBI-1052570">
        <id>O95995</id>
    </interactant>
    <interactant intactId="EBI-947015">
        <id>P24592</id>
        <label>IGFBP6</label>
    </interactant>
    <organismsDiffer>false</organismsDiffer>
    <experiments>3</experiments>
</comment>
<comment type="interaction">
    <interactant intactId="EBI-1052570">
        <id>O95995</id>
    </interactant>
    <interactant intactId="EBI-710124">
        <id>O60341</id>
        <label>KDM1A</label>
    </interactant>
    <organismsDiffer>false</organismsDiffer>
    <experiments>3</experiments>
</comment>
<comment type="interaction">
    <interactant intactId="EBI-1052570">
        <id>O95995</id>
    </interactant>
    <interactant intactId="EBI-702178">
        <id>P02533</id>
        <label>KRT14</label>
    </interactant>
    <organismsDiffer>false</organismsDiffer>
    <experiments>3</experiments>
</comment>
<comment type="interaction">
    <interactant intactId="EBI-1052570">
        <id>O95995</id>
    </interactant>
    <interactant intactId="EBI-739566">
        <id>P19012</id>
        <label>KRT15</label>
    </interactant>
    <organismsDiffer>false</organismsDiffer>
    <experiments>3</experiments>
</comment>
<comment type="interaction">
    <interactant intactId="EBI-1052570">
        <id>O95995</id>
    </interactant>
    <interactant intactId="EBI-356410">
        <id>P08779</id>
        <label>KRT16</label>
    </interactant>
    <organismsDiffer>false</organismsDiffer>
    <experiments>3</experiments>
</comment>
<comment type="interaction">
    <interactant intactId="EBI-1052570">
        <id>O95995</id>
    </interactant>
    <interactant intactId="EBI-3044087">
        <id>Q7Z3Y8</id>
        <label>KRT27</label>
    </interactant>
    <organismsDiffer>false</organismsDiffer>
    <experiments>4</experiments>
</comment>
<comment type="interaction">
    <interactant intactId="EBI-1052570">
        <id>O95995</id>
    </interactant>
    <interactant intactId="EBI-739909">
        <id>Q969R5</id>
        <label>L3MBTL2</label>
    </interactant>
    <organismsDiffer>false</organismsDiffer>
    <experiments>3</experiments>
</comment>
<comment type="interaction">
    <interactant intactId="EBI-1052570">
        <id>O95995</id>
    </interactant>
    <interactant intactId="EBI-11985629">
        <id>Q96JM7-2</id>
        <label>L3MBTL3</label>
    </interactant>
    <organismsDiffer>false</organismsDiffer>
    <experiments>3</experiments>
</comment>
<comment type="interaction">
    <interactant intactId="EBI-1052570">
        <id>O95995</id>
    </interactant>
    <interactant intactId="EBI-9088686">
        <id>Q14847-2</id>
        <label>LASP1</label>
    </interactant>
    <organismsDiffer>false</organismsDiffer>
    <experiments>3</experiments>
</comment>
<comment type="interaction">
    <interactant intactId="EBI-1052570">
        <id>O95995</id>
    </interactant>
    <interactant intactId="EBI-12039345">
        <id>Q9UBR4-2</id>
        <label>LHX3</label>
    </interactant>
    <organismsDiffer>false</organismsDiffer>
    <experiments>3</experiments>
</comment>
<comment type="interaction">
    <interactant intactId="EBI-1052570">
        <id>O95995</id>
    </interactant>
    <interactant intactId="EBI-8639312">
        <id>P25800</id>
        <label>LMO1</label>
    </interactant>
    <organismsDiffer>false</organismsDiffer>
    <experiments>3</experiments>
</comment>
<comment type="interaction">
    <interactant intactId="EBI-1052570">
        <id>O95995</id>
    </interactant>
    <interactant intactId="EBI-11959475">
        <id>P25791-3</id>
        <label>LMO2</label>
    </interactant>
    <organismsDiffer>false</organismsDiffer>
    <experiments>3</experiments>
</comment>
<comment type="interaction">
    <interactant intactId="EBI-1052570">
        <id>O95995</id>
    </interactant>
    <interactant intactId="EBI-1216080">
        <id>Q9Y250</id>
        <label>LZTS1</label>
    </interactant>
    <organismsDiffer>false</organismsDiffer>
    <experiments>3</experiments>
</comment>
<comment type="interaction">
    <interactant intactId="EBI-1052570">
        <id>O95995</id>
    </interactant>
    <interactant intactId="EBI-742610">
        <id>Q9Y6D9</id>
        <label>MAD1L1</label>
    </interactant>
    <organismsDiffer>false</organismsDiffer>
    <experiments>3</experiments>
</comment>
<comment type="interaction">
    <interactant intactId="EBI-1052570">
        <id>O95995</id>
    </interactant>
    <interactant intactId="EBI-1048159">
        <id>P55081</id>
        <label>MFAP1</label>
    </interactant>
    <organismsDiffer>false</organismsDiffer>
    <experiments>3</experiments>
</comment>
<comment type="interaction">
    <interactant intactId="EBI-1052570">
        <id>O95995</id>
    </interactant>
    <interactant intactId="EBI-10172526">
        <id>Q9UJV3-2</id>
        <label>MID2</label>
    </interactant>
    <organismsDiffer>false</organismsDiffer>
    <experiments>3</experiments>
</comment>
<comment type="interaction">
    <interactant intactId="EBI-1052570">
        <id>O95995</id>
    </interactant>
    <interactant intactId="EBI-742459">
        <id>Q9BU76</id>
        <label>MMTAG2</label>
    </interactant>
    <organismsDiffer>false</organismsDiffer>
    <experiments>3</experiments>
</comment>
<comment type="interaction">
    <interactant intactId="EBI-1052570">
        <id>O95995</id>
    </interactant>
    <interactant intactId="EBI-748896">
        <id>Q96HT8</id>
        <label>MRFAP1L1</label>
    </interactant>
    <organismsDiffer>false</organismsDiffer>
    <experiments>3</experiments>
</comment>
<comment type="interaction">
    <interactant intactId="EBI-1052570">
        <id>O95995</id>
    </interactant>
    <interactant intactId="EBI-10249760">
        <id>Q9UHB4</id>
        <label>NDOR1</label>
    </interactant>
    <organismsDiffer>false</organismsDiffer>
    <experiments>3</experiments>
</comment>
<comment type="interaction">
    <interactant intactId="EBI-1052570">
        <id>O95995</id>
    </interactant>
    <interactant intactId="EBI-3920396">
        <id>Q6ZUT1</id>
        <label>NKAPD1</label>
    </interactant>
    <organismsDiffer>false</organismsDiffer>
    <experiments>3</experiments>
</comment>
<comment type="interaction">
    <interactant intactId="EBI-1052570">
        <id>O95995</id>
    </interactant>
    <interactant intactId="EBI-746202">
        <id>O00444</id>
        <label>PLK4</label>
    </interactant>
    <organismsDiffer>false</organismsDiffer>
    <experiments>3</experiments>
</comment>
<comment type="interaction">
    <interactant intactId="EBI-1052570">
        <id>O95995</id>
    </interactant>
    <interactant intactId="EBI-1045072">
        <id>Q96T60</id>
        <label>PNKP</label>
    </interactant>
    <organismsDiffer>false</organismsDiffer>
    <experiments>3</experiments>
</comment>
<comment type="interaction">
    <interactant intactId="EBI-1052570">
        <id>O95995</id>
    </interactant>
    <interactant intactId="EBI-10171633">
        <id>Q96PV4</id>
        <label>PNMA5</label>
    </interactant>
    <organismsDiffer>false</organismsDiffer>
    <experiments>3</experiments>
</comment>
<comment type="interaction">
    <interactant intactId="EBI-1052570">
        <id>O95995</id>
    </interactant>
    <interactant intactId="EBI-1055079">
        <id>O15160</id>
        <label>POLR1C</label>
    </interactant>
    <organismsDiffer>false</organismsDiffer>
    <experiments>3</experiments>
</comment>
<comment type="interaction">
    <interactant intactId="EBI-1052570">
        <id>O95995</id>
    </interactant>
    <interactant intactId="EBI-18165900">
        <id>A0JP26</id>
        <label>POTEB3</label>
    </interactant>
    <organismsDiffer>false</organismsDiffer>
    <experiments>3</experiments>
</comment>
<comment type="interaction">
    <interactant intactId="EBI-1052570">
        <id>O95995</id>
    </interactant>
    <interactant intactId="EBI-745426">
        <id>Q13136</id>
        <label>PPFIA1</label>
    </interactant>
    <organismsDiffer>false</organismsDiffer>
    <experiments>3</experiments>
</comment>
<comment type="interaction">
    <interactant intactId="EBI-1052570">
        <id>O95995</id>
    </interactant>
    <interactant intactId="EBI-3957793">
        <id>Q9GZV8</id>
        <label>PRDM14</label>
    </interactant>
    <organismsDiffer>false</organismsDiffer>
    <experiments>3</experiments>
</comment>
<comment type="interaction">
    <interactant intactId="EBI-1052570">
        <id>O95995</id>
    </interactant>
    <interactant intactId="EBI-351098">
        <id>O14744</id>
        <label>PRMT5</label>
    </interactant>
    <organismsDiffer>false</organismsDiffer>
    <experiments>3</experiments>
</comment>
<comment type="interaction">
    <interactant intactId="EBI-1052570">
        <id>O95995</id>
    </interactant>
    <interactant intactId="EBI-2798416">
        <id>Q99633</id>
        <label>PRPF18</label>
    </interactant>
    <organismsDiffer>false</organismsDiffer>
    <experiments>3</experiments>
</comment>
<comment type="interaction">
    <interactant intactId="EBI-1052570">
        <id>O95995</id>
    </interactant>
    <interactant intactId="EBI-749285">
        <id>Q15311</id>
        <label>RALBP1</label>
    </interactant>
    <organismsDiffer>false</organismsDiffer>
    <experiments>3</experiments>
</comment>
<comment type="interaction">
    <interactant intactId="EBI-1052570">
        <id>O95995</id>
    </interactant>
    <interactant intactId="EBI-1210429">
        <id>Q9NYW8</id>
        <label>RBAK</label>
    </interactant>
    <organismsDiffer>false</organismsDiffer>
    <experiments>3</experiments>
</comment>
<comment type="interaction">
    <interactant intactId="EBI-1052570">
        <id>O95995</id>
    </interactant>
    <interactant intactId="EBI-726876">
        <id>Q6NUQ1</id>
        <label>RINT1</label>
    </interactant>
    <organismsDiffer>false</organismsDiffer>
    <experiments>3</experiments>
</comment>
<comment type="interaction">
    <interactant intactId="EBI-1052570">
        <id>O95995</id>
    </interactant>
    <interactant intactId="EBI-2952709">
        <id>Q92622</id>
        <label>RUBCN</label>
    </interactant>
    <organismsDiffer>false</organismsDiffer>
    <experiments>3</experiments>
</comment>
<comment type="interaction">
    <interactant intactId="EBI-1052570">
        <id>O95995</id>
    </interactant>
    <interactant intactId="EBI-748391">
        <id>Q9BWG6</id>
        <label>SCNM1</label>
    </interactant>
    <organismsDiffer>false</organismsDiffer>
    <experiments>3</experiments>
</comment>
<comment type="interaction">
    <interactant intactId="EBI-1052570">
        <id>O95995</id>
    </interactant>
    <interactant intactId="EBI-2902468">
        <id>P12757</id>
        <label>SKIL</label>
    </interactant>
    <organismsDiffer>false</organismsDiffer>
    <experiments>3</experiments>
</comment>
<comment type="interaction">
    <interactant intactId="EBI-1052570">
        <id>O95995</id>
    </interactant>
    <interactant intactId="EBI-741237">
        <id>O60504</id>
        <label>SORBS3</label>
    </interactant>
    <organismsDiffer>false</organismsDiffer>
    <experiments>3</experiments>
</comment>
<comment type="interaction">
    <interactant intactId="EBI-1052570">
        <id>O95995</id>
    </interactant>
    <interactant intactId="EBI-10713842">
        <id>Q8TDD2</id>
        <label>SP7</label>
    </interactant>
    <organismsDiffer>false</organismsDiffer>
    <experiments>3</experiments>
</comment>
<comment type="interaction">
    <interactant intactId="EBI-1052570">
        <id>O95995</id>
    </interactant>
    <interactant intactId="EBI-11334239">
        <id>Q8TC71</id>
        <label>SPATA18</label>
    </interactant>
    <organismsDiffer>false</organismsDiffer>
    <experiments>3</experiments>
</comment>
<comment type="interaction">
    <interactant intactId="EBI-1052570">
        <id>O95995</id>
    </interactant>
    <interactant intactId="EBI-742688">
        <id>Q9NZD8</id>
        <label>SPG21</label>
    </interactant>
    <organismsDiffer>false</organismsDiffer>
    <experiments>3</experiments>
</comment>
<comment type="interaction">
    <interactant intactId="EBI-1052570">
        <id>O95995</id>
    </interactant>
    <interactant intactId="EBI-745680">
        <id>Q96MF2</id>
        <label>STAC3</label>
    </interactant>
    <organismsDiffer>false</organismsDiffer>
    <experiments>3</experiments>
</comment>
<comment type="interaction">
    <interactant intactId="EBI-1052570">
        <id>O95995</id>
    </interactant>
    <interactant intactId="EBI-710310">
        <id>Q15560</id>
        <label>TCEA2</label>
    </interactant>
    <organismsDiffer>false</organismsDiffer>
    <experiments>3</experiments>
</comment>
<comment type="interaction">
    <interactant intactId="EBI-1052570">
        <id>O95995</id>
    </interactant>
    <interactant intactId="EBI-741515">
        <id>Q9NVV9</id>
        <label>THAP1</label>
    </interactant>
    <organismsDiffer>false</organismsDiffer>
    <experiments>3</experiments>
</comment>
<comment type="interaction">
    <interactant intactId="EBI-1052570">
        <id>O95995</id>
    </interactant>
    <interactant intactId="EBI-527670">
        <id>P21580</id>
        <label>TNFAIP3</label>
    </interactant>
    <organismsDiffer>false</organismsDiffer>
    <experiments>3</experiments>
</comment>
<comment type="interaction">
    <interactant intactId="EBI-1052570">
        <id>O95995</id>
    </interactant>
    <interactant intactId="EBI-355744">
        <id>Q12933</id>
        <label>TRAF2</label>
    </interactant>
    <organismsDiffer>false</organismsDiffer>
    <experiments>3</experiments>
</comment>
<comment type="interaction">
    <interactant intactId="EBI-1052570">
        <id>O95995</id>
    </interactant>
    <interactant intactId="EBI-523498">
        <id>O00463</id>
        <label>TRAF5</label>
    </interactant>
    <organismsDiffer>false</organismsDiffer>
    <experiments>3</experiments>
</comment>
<comment type="interaction">
    <interactant intactId="EBI-1052570">
        <id>O95995</id>
    </interactant>
    <interactant intactId="EBI-725997">
        <id>Q8WV44</id>
        <label>TRIM41</label>
    </interactant>
    <organismsDiffer>false</organismsDiffer>
    <experiments>3</experiments>
</comment>
<comment type="interaction">
    <interactant intactId="EBI-1052570">
        <id>O95995</id>
    </interactant>
    <interactant intactId="EBI-2130429">
        <id>Q9BYV2</id>
        <label>TRIM54</label>
    </interactant>
    <organismsDiffer>false</organismsDiffer>
    <experiments>3</experiments>
</comment>
<comment type="interaction">
    <interactant intactId="EBI-1052570">
        <id>O95995</id>
    </interactant>
    <interactant intactId="EBI-1049298">
        <id>P43897</id>
        <label>TSFM</label>
    </interactant>
    <organismsDiffer>false</organismsDiffer>
    <experiments>3</experiments>
</comment>
<comment type="interaction">
    <interactant intactId="EBI-1052570">
        <id>O95995</id>
    </interactant>
    <interactant intactId="EBI-10241197">
        <id>Q3SY00</id>
        <label>TSGA10IP</label>
    </interactant>
    <organismsDiffer>false</organismsDiffer>
    <experiments>3</experiments>
</comment>
<comment type="interaction">
    <interactant intactId="EBI-1052570">
        <id>O95995</id>
    </interactant>
    <interactant intactId="EBI-359793">
        <id>P40222</id>
        <label>TXLNA</label>
    </interactant>
    <organismsDiffer>false</organismsDiffer>
    <experiments>3</experiments>
</comment>
<comment type="interaction">
    <interactant intactId="EBI-1052570">
        <id>O95995</id>
    </interactant>
    <interactant intactId="EBI-6116822">
        <id>Q8N3L3</id>
        <label>TXLNB</label>
    </interactant>
    <organismsDiffer>false</organismsDiffer>
    <experiments>3</experiments>
</comment>
<comment type="interaction">
    <interactant intactId="EBI-1052570">
        <id>O95995</id>
    </interactant>
    <interactant intactId="EBI-739895">
        <id>Q8N6Y0</id>
        <label>USHBP1</label>
    </interactant>
    <organismsDiffer>false</organismsDiffer>
    <experiments>3</experiments>
</comment>
<comment type="interaction">
    <interactant intactId="EBI-1052570">
        <id>O95995</id>
    </interactant>
    <interactant intactId="EBI-515331">
        <id>P07947</id>
        <label>YES1</label>
    </interactant>
    <organismsDiffer>false</organismsDiffer>
    <experiments>3</experiments>
</comment>
<comment type="interaction">
    <interactant intactId="EBI-1052570">
        <id>O95995</id>
    </interactant>
    <interactant intactId="EBI-10300345">
        <id>Q9BW85</id>
        <label>YJU2</label>
    </interactant>
    <organismsDiffer>false</organismsDiffer>
    <experiments>3</experiments>
</comment>
<comment type="interaction">
    <interactant intactId="EBI-1052570">
        <id>O95995</id>
    </interactant>
    <interactant intactId="EBI-723574">
        <id>O15209</id>
        <label>ZBTB22</label>
    </interactant>
    <organismsDiffer>false</organismsDiffer>
    <experiments>3</experiments>
</comment>
<comment type="interaction">
    <interactant intactId="EBI-1052570">
        <id>O95995</id>
    </interactant>
    <interactant intactId="EBI-3918996">
        <id>Q9HCK0</id>
        <label>ZBTB26</label>
    </interactant>
    <organismsDiffer>false</organismsDiffer>
    <experiments>5</experiments>
</comment>
<comment type="interaction">
    <interactant intactId="EBI-1052570">
        <id>O95995</id>
    </interactant>
    <interactant intactId="EBI-9995672">
        <id>O15060</id>
        <label>ZBTB39</label>
    </interactant>
    <organismsDiffer>false</organismsDiffer>
    <experiments>3</experiments>
</comment>
<comment type="interaction">
    <interactant intactId="EBI-1052570">
        <id>O95995</id>
    </interactant>
    <interactant intactId="EBI-1640204">
        <id>Q9UDV6</id>
        <label>ZNF212</label>
    </interactant>
    <organismsDiffer>false</organismsDiffer>
    <experiments>3</experiments>
</comment>
<comment type="interaction">
    <interactant intactId="EBI-1052570">
        <id>O95995</id>
    </interactant>
    <interactant intactId="EBI-10177272">
        <id>P15622-3</id>
        <label>ZNF250</label>
    </interactant>
    <organismsDiffer>false</organismsDiffer>
    <experiments>3</experiments>
</comment>
<comment type="interaction">
    <interactant intactId="EBI-1052570">
        <id>O95995</id>
    </interactant>
    <interactant intactId="EBI-10172590">
        <id>Q7Z3I7</id>
        <label>ZNF572</label>
    </interactant>
    <organismsDiffer>false</organismsDiffer>
    <experiments>3</experiments>
</comment>
<comment type="interaction">
    <interactant intactId="EBI-1052570">
        <id>O95995</id>
    </interactant>
    <interactant intactId="EBI-4395669">
        <id>Q6ZNG0</id>
        <label>ZNF620</label>
    </interactant>
    <organismsDiffer>false</organismsDiffer>
    <experiments>3</experiments>
</comment>
<comment type="interaction">
    <interactant intactId="EBI-1052570">
        <id>O95995</id>
    </interactant>
    <interactant intactId="EBI-9977294">
        <id>Q9UEG4</id>
        <label>ZNF629</label>
    </interactant>
    <organismsDiffer>false</organismsDiffer>
    <experiments>3</experiments>
</comment>
<comment type="interaction">
    <interactant intactId="EBI-1052570">
        <id>O95995</id>
    </interactant>
    <interactant intactId="EBI-10240849">
        <id>Q3KQV3</id>
        <label>ZNF792</label>
    </interactant>
    <organismsDiffer>false</organismsDiffer>
    <experiments>3</experiments>
</comment>
<comment type="subcellular location">
    <subcellularLocation>
        <location evidence="1">Cytoplasm</location>
    </subcellularLocation>
    <subcellularLocation>
        <location evidence="5">Cytoplasm</location>
        <location evidence="5">Cytoskeleton</location>
    </subcellularLocation>
    <subcellularLocation>
        <location evidence="1">Cell projection</location>
        <location evidence="1">Cilium</location>
        <location evidence="1">Flagellum</location>
    </subcellularLocation>
    <subcellularLocation>
        <location evidence="6 8">Cytoplasm</location>
        <location evidence="6 8">Cytoskeleton</location>
        <location evidence="6 8">Cilium axoneme</location>
    </subcellularLocation>
    <subcellularLocation>
        <location evidence="1">Cytoplasm</location>
        <location evidence="1">Cytoskeleton</location>
        <location evidence="1">Cilium basal body</location>
    </subcellularLocation>
    <subcellularLocation>
        <location evidence="6">Golgi apparatus</location>
    </subcellularLocation>
    <subcellularLocation>
        <location evidence="9">Cell projection</location>
        <location evidence="9">Cilium</location>
    </subcellularLocation>
    <subcellularLocation>
        <location evidence="2">Cytoplasm</location>
        <location evidence="2">Cytoskeleton</location>
        <location evidence="2">Flagellum axoneme</location>
    </subcellularLocation>
    <text evidence="1 5">Associates with microtubules (PubMed:10969087). Localized to the cytoplasm of round spermatids, the tails of elongating spermatids, and mature spermatid tail bundles protruding into the lumen, and in the flagellum of epididymal spermatozoa (By similarity).</text>
</comment>
<comment type="alternative products">
    <event type="alternative splicing"/>
    <isoform>
        <id>O95995-1</id>
        <name>1</name>
        <sequence type="displayed"/>
    </isoform>
    <isoform>
        <id>O95995-2</id>
        <name>2</name>
        <sequence type="described" ref="VSP_054805"/>
    </isoform>
</comment>
<comment type="tissue specificity">
    <text evidence="8 9 12">Expressed in respiratory epithelial cells (at protein level) (PubMed:26387594). Expressed in the heart, skeletal muscle, pancreas, liver, brain, trachea and lung. Weakly or not expressed in placenta and kidney (PubMed:9790751).</text>
</comment>
<comment type="disease" evidence="8 9 10">
    <disease id="DI-04621">
        <name>Ciliary dyskinesia, primary, 33</name>
        <acronym>CILD33</acronym>
        <description>A form of primary ciliary dyskinesia, a disorder characterized by abnormalities of motile cilia. Respiratory infections leading to chronic inflammation and bronchiectasis are recurrent, due to defects in the respiratory cilia. CILD33 inheritance is autosomal recessive.</description>
        <dbReference type="MIM" id="616726"/>
    </disease>
    <text>The disease is caused by variants affecting the gene represented in this entry.</text>
</comment>
<comment type="similarity">
    <text evidence="15">Belongs to the DRC4 family.</text>
</comment>
<proteinExistence type="evidence at protein level"/>
<feature type="chain" id="PRO_0000220377" description="Dynein regulatory complex subunit 4">
    <location>
        <begin position="1"/>
        <end position="478"/>
    </location>
</feature>
<feature type="region of interest" description="Regulates microtubule-binding" evidence="1">
    <location>
        <begin position="1"/>
        <end position="114"/>
    </location>
</feature>
<feature type="region of interest" description="Disordered" evidence="4">
    <location>
        <begin position="1"/>
        <end position="33"/>
    </location>
</feature>
<feature type="region of interest" description="Microtubule-binding" evidence="1">
    <location>
        <begin position="115"/>
        <end position="258"/>
    </location>
</feature>
<feature type="region of interest" description="Interaction with SMO" evidence="7">
    <location>
        <begin position="357"/>
        <end position="478"/>
    </location>
</feature>
<feature type="coiled-coil region" evidence="3">
    <location>
        <begin position="242"/>
        <end position="427"/>
    </location>
</feature>
<feature type="compositionally biased region" description="Basic residues" evidence="4">
    <location>
        <begin position="1"/>
        <end position="12"/>
    </location>
</feature>
<feature type="splice variant" id="VSP_054805" description="In isoform 2." evidence="13">
    <location>
        <begin position="1"/>
        <end position="25"/>
    </location>
</feature>
<feature type="sequence variant" id="VAR_080336" description="In CILD33; loss of localization to cilia; abnormal cilia with axonemal disorganization." evidence="9">
    <location>
        <begin position="183"/>
        <end position="478"/>
    </location>
</feature>
<feature type="sequence variant" id="VAR_016006" description="In dbSNP:rs868044." evidence="10">
    <original>E</original>
    <variation>K</variation>
    <location>
        <position position="199"/>
    </location>
</feature>
<feature type="sequence variant" id="VAR_049230" description="In dbSNP:rs17178299.">
    <original>R</original>
    <variation>Q</variation>
    <location>
        <position position="259"/>
    </location>
</feature>
<feature type="sequence variant" id="VAR_080337" description="In CILD33; loss of localization to cilia; abnormal cilia with axonemal disorganization." evidence="9">
    <location>
        <begin position="334"/>
        <end position="478"/>
    </location>
</feature>
<feature type="sequence variant" id="VAR_080338" description="In CILD33; the same mutation in the mouse sequence shows a moderate decrease in cilia motility; dbSNP:rs147993982." evidence="10">
    <original>A</original>
    <variation>V</variation>
    <location>
        <position position="391"/>
    </location>
</feature>
<feature type="sequence conflict" description="In Ref. 2; BAH12677." evidence="15" ref="2">
    <original>E</original>
    <variation>G</variation>
    <location>
        <position position="33"/>
    </location>
</feature>
<feature type="sequence conflict" description="In Ref. 2; BAH12677." evidence="15" ref="2">
    <original>A</original>
    <variation>V</variation>
    <location>
        <position position="87"/>
    </location>
</feature>